<name>FGF12_HUMAN</name>
<feature type="chain" id="PRO_0000147604" description="Fibroblast growth factor 12">
    <location>
        <begin position="1"/>
        <end position="243"/>
    </location>
</feature>
<feature type="region of interest" description="Disordered" evidence="3">
    <location>
        <begin position="1"/>
        <end position="39"/>
    </location>
</feature>
<feature type="region of interest" description="Disordered" evidence="3">
    <location>
        <begin position="216"/>
        <end position="243"/>
    </location>
</feature>
<feature type="short sequence motif" description="Bipartite nuclear localization signal" evidence="2">
    <location>
        <begin position="11"/>
        <end position="38"/>
    </location>
</feature>
<feature type="splice variant" id="VSP_010222" description="In isoform 2." evidence="5 6 7">
    <original>MAAAIASSLIRQKRQARESNSDRVSASKRRSSPSKDGRSLCERHVLGVFSKVRFCSGRKRPVRRRP</original>
    <variation>MESK</variation>
    <location>
        <begin position="1"/>
        <end position="66"/>
    </location>
</feature>
<feature type="sequence variant" id="VAR_076507" description="In DEE47; increased function in positive regulation of SCN8A voltage-dependent sodium channel activity; dbSNP:rs886039903." evidence="4">
    <original>R</original>
    <variation>H</variation>
    <location>
        <position position="114"/>
    </location>
</feature>
<feature type="mutagenesis site" description="Gain of function, affects voltage dependence of SCN8A fast inactivation." evidence="4">
    <original>R</original>
    <variation>A</variation>
    <location>
        <position position="114"/>
    </location>
</feature>
<feature type="mutagenesis site" description="Gain of function, affects voltage dependence of SCN8A fast inactivation." evidence="4">
    <original>R</original>
    <variation>G</variation>
    <location>
        <position position="114"/>
    </location>
</feature>
<feature type="sequence conflict" description="In Ref. 2; AAB18786." evidence="8" ref="2">
    <original>K</original>
    <variation>E</variation>
    <location>
        <position position="190"/>
    </location>
</feature>
<feature type="sequence conflict" description="In Ref. 5; AAH22524." evidence="8" ref="5">
    <original>P</original>
    <variation>Q</variation>
    <location>
        <position position="211"/>
    </location>
</feature>
<feature type="sequence conflict" description="In Ref. 2; AAB18786." evidence="8" ref="2">
    <original>TPTMNGGKVVNQDST</original>
    <variation>HHHDGGKL</variation>
    <location>
        <begin position="229"/>
        <end position="243"/>
    </location>
</feature>
<feature type="strand" evidence="9">
    <location>
        <begin position="73"/>
        <end position="79"/>
    </location>
</feature>
<feature type="turn" evidence="9">
    <location>
        <begin position="80"/>
        <end position="82"/>
    </location>
</feature>
<feature type="strand" evidence="9">
    <location>
        <begin position="83"/>
        <end position="87"/>
    </location>
</feature>
<feature type="strand" evidence="9">
    <location>
        <begin position="93"/>
        <end position="97"/>
    </location>
</feature>
<feature type="helix" evidence="9">
    <location>
        <begin position="102"/>
        <end position="104"/>
    </location>
</feature>
<feature type="strand" evidence="9">
    <location>
        <begin position="106"/>
        <end position="112"/>
    </location>
</feature>
<feature type="strand" evidence="9">
    <location>
        <begin position="115"/>
        <end position="120"/>
    </location>
</feature>
<feature type="turn" evidence="9">
    <location>
        <begin position="121"/>
        <end position="123"/>
    </location>
</feature>
<feature type="strand" evidence="9">
    <location>
        <begin position="126"/>
        <end position="129"/>
    </location>
</feature>
<feature type="strand" evidence="9">
    <location>
        <begin position="135"/>
        <end position="140"/>
    </location>
</feature>
<feature type="helix" evidence="9">
    <location>
        <begin position="143"/>
        <end position="145"/>
    </location>
</feature>
<feature type="strand" evidence="9">
    <location>
        <begin position="147"/>
        <end position="152"/>
    </location>
</feature>
<feature type="turn" evidence="9">
    <location>
        <begin position="153"/>
        <end position="155"/>
    </location>
</feature>
<feature type="strand" evidence="9">
    <location>
        <begin position="156"/>
        <end position="165"/>
    </location>
</feature>
<feature type="turn" evidence="9">
    <location>
        <begin position="167"/>
        <end position="169"/>
    </location>
</feature>
<feature type="strand" evidence="9">
    <location>
        <begin position="172"/>
        <end position="174"/>
    </location>
</feature>
<feature type="strand" evidence="9">
    <location>
        <begin position="181"/>
        <end position="183"/>
    </location>
</feature>
<feature type="helix" evidence="9">
    <location>
        <begin position="186"/>
        <end position="188"/>
    </location>
</feature>
<feature type="helix" evidence="9">
    <location>
        <begin position="194"/>
        <end position="196"/>
    </location>
</feature>
<feature type="strand" evidence="9">
    <location>
        <begin position="198"/>
        <end position="202"/>
    </location>
</feature>
<sequence>MAAAIASSLIRQKRQARESNSDRVSASKRRSSPSKDGRSLCERHVLGVFSKVRFCSGRKRPVRRRPEPQLKGIVTRLFSQQGYFLQMHPDGTIDGTKDENSDYTLFNLIPVGLRVVAIQGVKASLYVAMNGEGYLYSSDVFTPECKFKESVFENYYVIYSSTLYRQQESGRAWFLGLNKEGQIMKGNRVKKTKPSSHFVPKPIEVCMYREPSLHEIGEKQGRSRKSSGTPTMNGGKVVNQDST</sequence>
<gene>
    <name type="primary">FGF12</name>
    <name type="synonym">FGF12B</name>
    <name type="synonym">FHF1</name>
</gene>
<evidence type="ECO:0000250" key="1"/>
<evidence type="ECO:0000255" key="2"/>
<evidence type="ECO:0000256" key="3">
    <source>
        <dbReference type="SAM" id="MobiDB-lite"/>
    </source>
</evidence>
<evidence type="ECO:0000269" key="4">
    <source>
    </source>
</evidence>
<evidence type="ECO:0000303" key="5">
    <source>
    </source>
</evidence>
<evidence type="ECO:0000303" key="6">
    <source>
    </source>
</evidence>
<evidence type="ECO:0000303" key="7">
    <source>
    </source>
</evidence>
<evidence type="ECO:0000305" key="8"/>
<evidence type="ECO:0007829" key="9">
    <source>
        <dbReference type="PDB" id="1Q1U"/>
    </source>
</evidence>
<dbReference type="EMBL" id="U66197">
    <property type="protein sequence ID" value="AAB18913.1"/>
    <property type="molecule type" value="mRNA"/>
</dbReference>
<dbReference type="EMBL" id="U76381">
    <property type="protein sequence ID" value="AAB18786.3"/>
    <property type="molecule type" value="mRNA"/>
</dbReference>
<dbReference type="EMBL" id="AK125307">
    <property type="protein sequence ID" value="BAG54181.1"/>
    <property type="molecule type" value="mRNA"/>
</dbReference>
<dbReference type="EMBL" id="AK313671">
    <property type="protein sequence ID" value="BAG36423.1"/>
    <property type="molecule type" value="mRNA"/>
</dbReference>
<dbReference type="EMBL" id="AK312513">
    <property type="protein sequence ID" value="BAG35414.1"/>
    <property type="molecule type" value="mRNA"/>
</dbReference>
<dbReference type="EMBL" id="CH471052">
    <property type="protein sequence ID" value="EAW78084.1"/>
    <property type="molecule type" value="Genomic_DNA"/>
</dbReference>
<dbReference type="EMBL" id="BC022524">
    <property type="protein sequence ID" value="AAH22524.1"/>
    <property type="molecule type" value="mRNA"/>
</dbReference>
<dbReference type="CCDS" id="CCDS3301.1">
    <molecule id="P61328-1"/>
</dbReference>
<dbReference type="CCDS" id="CCDS46983.1">
    <molecule id="P61328-2"/>
</dbReference>
<dbReference type="PIR" id="JG0184">
    <property type="entry name" value="JG0184"/>
</dbReference>
<dbReference type="RefSeq" id="NP_004104.3">
    <molecule id="P61328-2"/>
    <property type="nucleotide sequence ID" value="NM_004113.5"/>
</dbReference>
<dbReference type="RefSeq" id="NP_066360.1">
    <molecule id="P61328-1"/>
    <property type="nucleotide sequence ID" value="NM_021032.5"/>
</dbReference>
<dbReference type="PDB" id="1Q1U">
    <property type="method" value="X-ray"/>
    <property type="resolution" value="1.70 A"/>
    <property type="chains" value="A=67-206"/>
</dbReference>
<dbReference type="PDB" id="4JQ0">
    <property type="method" value="X-ray"/>
    <property type="resolution" value="3.84 A"/>
    <property type="chains" value="A=1-243"/>
</dbReference>
<dbReference type="PDBsum" id="1Q1U"/>
<dbReference type="PDBsum" id="4JQ0"/>
<dbReference type="SMR" id="P61328"/>
<dbReference type="BioGRID" id="108548">
    <property type="interactions" value="80"/>
</dbReference>
<dbReference type="ComplexPortal" id="CPX-8940">
    <property type="entry name" value="Ribosome biogenesis complex"/>
</dbReference>
<dbReference type="DIP" id="DIP-59850N"/>
<dbReference type="FunCoup" id="P61328">
    <property type="interactions" value="697"/>
</dbReference>
<dbReference type="IntAct" id="P61328">
    <property type="interactions" value="141"/>
</dbReference>
<dbReference type="STRING" id="9606.ENSP00000413496"/>
<dbReference type="iPTMnet" id="P61328"/>
<dbReference type="PhosphoSitePlus" id="P61328"/>
<dbReference type="BioMuta" id="FGF12"/>
<dbReference type="DMDM" id="47117683"/>
<dbReference type="jPOST" id="P61328"/>
<dbReference type="MassIVE" id="P61328"/>
<dbReference type="PaxDb" id="9606-ENSP00000413496"/>
<dbReference type="PeptideAtlas" id="P61328"/>
<dbReference type="ProteomicsDB" id="57295">
    <molecule id="P61328-1"/>
</dbReference>
<dbReference type="ProteomicsDB" id="57296">
    <molecule id="P61328-2"/>
</dbReference>
<dbReference type="Pumba" id="P61328"/>
<dbReference type="ABCD" id="P61328">
    <property type="antibodies" value="1 sequenced antibody"/>
</dbReference>
<dbReference type="Antibodypedia" id="33876">
    <property type="antibodies" value="250 antibodies from 33 providers"/>
</dbReference>
<dbReference type="DNASU" id="2257"/>
<dbReference type="Ensembl" id="ENST00000445105.7">
    <molecule id="P61328-2"/>
    <property type="protein sequence ID" value="ENSP00000393686.1"/>
    <property type="gene ID" value="ENSG00000114279.15"/>
</dbReference>
<dbReference type="Ensembl" id="ENST00000450716.5">
    <molecule id="P61328-2"/>
    <property type="protein sequence ID" value="ENSP00000397635.1"/>
    <property type="gene ID" value="ENSG00000114279.15"/>
</dbReference>
<dbReference type="Ensembl" id="ENST00000454309.7">
    <molecule id="P61328-1"/>
    <property type="protein sequence ID" value="ENSP00000413496.2"/>
    <property type="gene ID" value="ENSG00000114279.15"/>
</dbReference>
<dbReference type="Ensembl" id="ENST00000683451.2">
    <molecule id="P61328-2"/>
    <property type="protein sequence ID" value="ENSP00000508366.1"/>
    <property type="gene ID" value="ENSG00000114279.15"/>
</dbReference>
<dbReference type="Ensembl" id="ENST00000683935.1">
    <molecule id="P61328-2"/>
    <property type="protein sequence ID" value="ENSP00000507098.1"/>
    <property type="gene ID" value="ENSG00000114279.15"/>
</dbReference>
<dbReference type="GeneID" id="2257"/>
<dbReference type="KEGG" id="hsa:2257"/>
<dbReference type="MANE-Select" id="ENST00000445105.7">
    <molecule id="P61328-2"/>
    <property type="protein sequence ID" value="ENSP00000393686.1"/>
    <property type="RefSeq nucleotide sequence ID" value="NM_004113.6"/>
    <property type="RefSeq protein sequence ID" value="NP_004104.3"/>
</dbReference>
<dbReference type="UCSC" id="uc003fsx.4">
    <molecule id="P61328-1"/>
    <property type="organism name" value="human"/>
</dbReference>
<dbReference type="AGR" id="HGNC:3668"/>
<dbReference type="CTD" id="2257"/>
<dbReference type="DisGeNET" id="2257"/>
<dbReference type="GeneCards" id="FGF12"/>
<dbReference type="GeneReviews" id="FGF12"/>
<dbReference type="HGNC" id="HGNC:3668">
    <property type="gene designation" value="FGF12"/>
</dbReference>
<dbReference type="HPA" id="ENSG00000114279">
    <property type="expression patterns" value="Tissue enriched (heart)"/>
</dbReference>
<dbReference type="MalaCards" id="FGF12"/>
<dbReference type="MIM" id="601513">
    <property type="type" value="gene"/>
</dbReference>
<dbReference type="MIM" id="617166">
    <property type="type" value="phenotype"/>
</dbReference>
<dbReference type="neXtProt" id="NX_P61328"/>
<dbReference type="OpenTargets" id="ENSG00000114279"/>
<dbReference type="Orphanet" id="442835">
    <property type="disease" value="Non-specific early-onset epileptic encephalopathy"/>
</dbReference>
<dbReference type="PharmGKB" id="PA28108"/>
<dbReference type="VEuPathDB" id="HostDB:ENSG00000114279"/>
<dbReference type="eggNOG" id="KOG3885">
    <property type="taxonomic scope" value="Eukaryota"/>
</dbReference>
<dbReference type="GeneTree" id="ENSGT00940000155929"/>
<dbReference type="HOGENOM" id="CLU_081609_2_0_1"/>
<dbReference type="InParanoid" id="P61328"/>
<dbReference type="OMA" id="LWIKSRH"/>
<dbReference type="OrthoDB" id="9512263at2759"/>
<dbReference type="PAN-GO" id="P61328">
    <property type="GO annotations" value="4 GO annotations based on evolutionary models"/>
</dbReference>
<dbReference type="PhylomeDB" id="P61328"/>
<dbReference type="TreeFam" id="TF330751"/>
<dbReference type="PathwayCommons" id="P61328"/>
<dbReference type="Reactome" id="R-HSA-5576892">
    <property type="pathway name" value="Phase 0 - rapid depolarisation"/>
</dbReference>
<dbReference type="SignaLink" id="P61328"/>
<dbReference type="SIGNOR" id="P61328"/>
<dbReference type="BioGRID-ORCS" id="2257">
    <property type="hits" value="10 hits in 1146 CRISPR screens"/>
</dbReference>
<dbReference type="ChiTaRS" id="FGF12">
    <property type="organism name" value="human"/>
</dbReference>
<dbReference type="EvolutionaryTrace" id="P61328"/>
<dbReference type="GeneWiki" id="FGF12"/>
<dbReference type="GenomeRNAi" id="2257"/>
<dbReference type="Pharos" id="P61328">
    <property type="development level" value="Tbio"/>
</dbReference>
<dbReference type="PRO" id="PR:P61328"/>
<dbReference type="Proteomes" id="UP000005640">
    <property type="component" value="Chromosome 3"/>
</dbReference>
<dbReference type="RNAct" id="P61328">
    <property type="molecule type" value="protein"/>
</dbReference>
<dbReference type="Bgee" id="ENSG00000114279">
    <property type="expression patterns" value="Expressed in right atrium auricular region and 133 other cell types or tissues"/>
</dbReference>
<dbReference type="ExpressionAtlas" id="P61328">
    <property type="expression patterns" value="baseline and differential"/>
</dbReference>
<dbReference type="GO" id="GO:0005737">
    <property type="term" value="C:cytoplasm"/>
    <property type="evidence" value="ECO:0000318"/>
    <property type="project" value="GO_Central"/>
</dbReference>
<dbReference type="GO" id="GO:0005615">
    <property type="term" value="C:extracellular space"/>
    <property type="evidence" value="ECO:0000304"/>
    <property type="project" value="ProtInc"/>
</dbReference>
<dbReference type="GO" id="GO:0005634">
    <property type="term" value="C:nucleus"/>
    <property type="evidence" value="ECO:0000314"/>
    <property type="project" value="MGI"/>
</dbReference>
<dbReference type="GO" id="GO:0045202">
    <property type="term" value="C:synapse"/>
    <property type="evidence" value="ECO:0007669"/>
    <property type="project" value="GOC"/>
</dbReference>
<dbReference type="GO" id="GO:0008083">
    <property type="term" value="F:growth factor activity"/>
    <property type="evidence" value="ECO:0000304"/>
    <property type="project" value="ProtInc"/>
</dbReference>
<dbReference type="GO" id="GO:0008201">
    <property type="term" value="F:heparin binding"/>
    <property type="evidence" value="ECO:0000314"/>
    <property type="project" value="MGI"/>
</dbReference>
<dbReference type="GO" id="GO:0017080">
    <property type="term" value="F:sodium channel regulator activity"/>
    <property type="evidence" value="ECO:0000250"/>
    <property type="project" value="BHF-UCL"/>
</dbReference>
<dbReference type="GO" id="GO:0044325">
    <property type="term" value="F:transmembrane transporter binding"/>
    <property type="evidence" value="ECO:0000250"/>
    <property type="project" value="BHF-UCL"/>
</dbReference>
<dbReference type="GO" id="GO:0008344">
    <property type="term" value="P:adult locomotory behavior"/>
    <property type="evidence" value="ECO:0007669"/>
    <property type="project" value="Ensembl"/>
</dbReference>
<dbReference type="GO" id="GO:0086002">
    <property type="term" value="P:cardiac muscle cell action potential involved in contraction"/>
    <property type="evidence" value="ECO:0000303"/>
    <property type="project" value="BHF-UCL"/>
</dbReference>
<dbReference type="GO" id="GO:0007267">
    <property type="term" value="P:cell-cell signaling"/>
    <property type="evidence" value="ECO:0000304"/>
    <property type="project" value="ProtInc"/>
</dbReference>
<dbReference type="GO" id="GO:0007268">
    <property type="term" value="P:chemical synaptic transmission"/>
    <property type="evidence" value="ECO:0007669"/>
    <property type="project" value="Ensembl"/>
</dbReference>
<dbReference type="GO" id="GO:0007507">
    <property type="term" value="P:heart development"/>
    <property type="evidence" value="ECO:0000304"/>
    <property type="project" value="ProtInc"/>
</dbReference>
<dbReference type="GO" id="GO:0007254">
    <property type="term" value="P:JNK cascade"/>
    <property type="evidence" value="ECO:0000353"/>
    <property type="project" value="MGI"/>
</dbReference>
<dbReference type="GO" id="GO:0007399">
    <property type="term" value="P:nervous system development"/>
    <property type="evidence" value="ECO:0000304"/>
    <property type="project" value="ProtInc"/>
</dbReference>
<dbReference type="GO" id="GO:0022008">
    <property type="term" value="P:neurogenesis"/>
    <property type="evidence" value="ECO:0000318"/>
    <property type="project" value="GO_Central"/>
</dbReference>
<dbReference type="GO" id="GO:0050905">
    <property type="term" value="P:neuromuscular process"/>
    <property type="evidence" value="ECO:0007669"/>
    <property type="project" value="Ensembl"/>
</dbReference>
<dbReference type="GO" id="GO:0010765">
    <property type="term" value="P:positive regulation of sodium ion transport"/>
    <property type="evidence" value="ECO:0007669"/>
    <property type="project" value="Ensembl"/>
</dbReference>
<dbReference type="GO" id="GO:0098908">
    <property type="term" value="P:regulation of neuronal action potential"/>
    <property type="evidence" value="ECO:0000315"/>
    <property type="project" value="UniProtKB"/>
</dbReference>
<dbReference type="GO" id="GO:1902305">
    <property type="term" value="P:regulation of sodium ion transmembrane transport"/>
    <property type="evidence" value="ECO:0000250"/>
    <property type="project" value="BHF-UCL"/>
</dbReference>
<dbReference type="GO" id="GO:1905150">
    <property type="term" value="P:regulation of voltage-gated sodium channel activity"/>
    <property type="evidence" value="ECO:0000315"/>
    <property type="project" value="UniProtKB"/>
</dbReference>
<dbReference type="GO" id="GO:0007165">
    <property type="term" value="P:signal transduction"/>
    <property type="evidence" value="ECO:0000304"/>
    <property type="project" value="ProtInc"/>
</dbReference>
<dbReference type="CDD" id="cd23328">
    <property type="entry name" value="beta-trefoil_FGF12"/>
    <property type="match status" value="1"/>
</dbReference>
<dbReference type="FunFam" id="2.80.10.50:FF:000001">
    <property type="entry name" value="Fibroblast growth factor"/>
    <property type="match status" value="1"/>
</dbReference>
<dbReference type="Gene3D" id="2.80.10.50">
    <property type="match status" value="1"/>
</dbReference>
<dbReference type="InterPro" id="IPR002209">
    <property type="entry name" value="Fibroblast_GF_fam"/>
</dbReference>
<dbReference type="InterPro" id="IPR008996">
    <property type="entry name" value="IL1/FGF"/>
</dbReference>
<dbReference type="PANTHER" id="PTHR11486">
    <property type="entry name" value="FIBROBLAST GROWTH FACTOR"/>
    <property type="match status" value="1"/>
</dbReference>
<dbReference type="Pfam" id="PF00167">
    <property type="entry name" value="FGF"/>
    <property type="match status" value="1"/>
</dbReference>
<dbReference type="PRINTS" id="PR00263">
    <property type="entry name" value="HBGFFGF"/>
</dbReference>
<dbReference type="PRINTS" id="PR00262">
    <property type="entry name" value="IL1HBGF"/>
</dbReference>
<dbReference type="SMART" id="SM00442">
    <property type="entry name" value="FGF"/>
    <property type="match status" value="1"/>
</dbReference>
<dbReference type="SUPFAM" id="SSF50353">
    <property type="entry name" value="Cytokine"/>
    <property type="match status" value="1"/>
</dbReference>
<dbReference type="PROSITE" id="PS00247">
    <property type="entry name" value="HBGF_FGF"/>
    <property type="match status" value="1"/>
</dbReference>
<comment type="function">
    <text evidence="4">Involved in nervous system development and function. Involved in the positive regulation of voltage-gated sodium channel activity. Promotes neuronal excitability by elevating the voltage dependence of neuronal sodium channel SCN8A fast inactivation.</text>
</comment>
<comment type="subunit">
    <text evidence="1">Interacts with the C-terminal region of SCN9A.</text>
</comment>
<comment type="interaction">
    <interactant intactId="EBI-6657662">
        <id>P61328</id>
    </interactant>
    <interactant intactId="EBI-945751">
        <id>P38432</id>
        <label>COIL</label>
    </interactant>
    <organismsDiffer>false</organismsDiffer>
    <experiments>3</experiments>
</comment>
<comment type="interaction">
    <interactant intactId="EBI-6657662">
        <id>P61328</id>
    </interactant>
    <interactant intactId="EBI-10186082">
        <id>Q9UI36-2</id>
        <label>DACH1</label>
    </interactant>
    <organismsDiffer>false</organismsDiffer>
    <experiments>3</experiments>
</comment>
<comment type="interaction">
    <interactant intactId="EBI-6657662">
        <id>P61328</id>
    </interactant>
    <interactant intactId="EBI-739870">
        <id>P32321</id>
        <label>DCTD</label>
    </interactant>
    <organismsDiffer>false</organismsDiffer>
    <experiments>3</experiments>
</comment>
<comment type="interaction">
    <interactant intactId="EBI-6657662">
        <id>P61328</id>
    </interactant>
    <interactant intactId="EBI-745305">
        <id>Q13422</id>
        <label>IKZF1</label>
    </interactant>
    <organismsDiffer>false</organismsDiffer>
    <experiments>3</experiments>
</comment>
<comment type="interaction">
    <interactant intactId="EBI-6657662">
        <id>P61328</id>
    </interactant>
    <interactant intactId="EBI-741037">
        <id>Q9BRK4</id>
        <label>LZTS2</label>
    </interactant>
    <organismsDiffer>false</organismsDiffer>
    <experiments>3</experiments>
</comment>
<comment type="interaction">
    <interactant intactId="EBI-6657662">
        <id>P61328</id>
    </interactant>
    <interactant intactId="EBI-2555738">
        <id>Q14592</id>
        <label>ZNF460</label>
    </interactant>
    <organismsDiffer>false</organismsDiffer>
    <experiments>3</experiments>
</comment>
<comment type="interaction">
    <interactant intactId="EBI-10699759">
        <id>P61328-2</id>
    </interactant>
    <interactant intactId="EBI-12051833">
        <id>Q5HYN5</id>
        <label>CT45A1</label>
    </interactant>
    <organismsDiffer>false</organismsDiffer>
    <experiments>3</experiments>
</comment>
<comment type="interaction">
    <interactant intactId="EBI-10699759">
        <id>P61328-2</id>
    </interactant>
    <interactant intactId="EBI-10186082">
        <id>Q9UI36-2</id>
        <label>DACH1</label>
    </interactant>
    <organismsDiffer>false</organismsDiffer>
    <experiments>3</experiments>
</comment>
<comment type="interaction">
    <interactant intactId="EBI-10699759">
        <id>P61328-2</id>
    </interactant>
    <interactant intactId="EBI-12193965">
        <id>Q9Y3R0-3</id>
        <label>GRIP1</label>
    </interactant>
    <organismsDiffer>false</organismsDiffer>
    <experiments>3</experiments>
</comment>
<comment type="interaction">
    <interactant intactId="EBI-10699759">
        <id>P61328-2</id>
    </interactant>
    <interactant intactId="EBI-1210429">
        <id>Q9NYW8</id>
        <label>RBAK</label>
    </interactant>
    <organismsDiffer>false</organismsDiffer>
    <experiments>3</experiments>
</comment>
<comment type="interaction">
    <interactant intactId="EBI-10699759">
        <id>P61328-2</id>
    </interactant>
    <interactant intactId="EBI-12002474">
        <id>Q2KHN1</id>
        <label>RNF151</label>
    </interactant>
    <organismsDiffer>false</organismsDiffer>
    <experiments>3</experiments>
</comment>
<comment type="interaction">
    <interactant intactId="EBI-10699759">
        <id>P61328-2</id>
    </interactant>
    <interactant intactId="EBI-630339">
        <id>Q8TA86</id>
        <label>RP9</label>
    </interactant>
    <organismsDiffer>false</organismsDiffer>
    <experiments>3</experiments>
</comment>
<comment type="interaction">
    <interactant intactId="EBI-10699759">
        <id>P61328-2</id>
    </interactant>
    <interactant intactId="EBI-726858">
        <id>Q14524</id>
        <label>SCN5A</label>
    </interactant>
    <organismsDiffer>false</organismsDiffer>
    <experiments>4</experiments>
</comment>
<comment type="interaction">
    <interactant intactId="EBI-10699759">
        <id>P61328-2</id>
    </interactant>
    <interactant intactId="EBI-745680">
        <id>Q96MF2</id>
        <label>STAC3</label>
    </interactant>
    <organismsDiffer>false</organismsDiffer>
    <experiments>3</experiments>
</comment>
<comment type="interaction">
    <interactant intactId="EBI-10699759">
        <id>P61328-2</id>
    </interactant>
    <interactant intactId="EBI-396105">
        <id>Q13428</id>
        <label>TCOF1</label>
    </interactant>
    <organismsDiffer>false</organismsDiffer>
    <experiments>9</experiments>
</comment>
<comment type="interaction">
    <interactant intactId="EBI-10699759">
        <id>P61328-2</id>
    </interactant>
    <interactant intactId="EBI-741515">
        <id>Q9NVV9</id>
        <label>THAP1</label>
    </interactant>
    <organismsDiffer>false</organismsDiffer>
    <experiments>3</experiments>
</comment>
<comment type="interaction">
    <interactant intactId="EBI-10699759">
        <id>P61328-2</id>
    </interactant>
    <interactant intactId="EBI-10237274">
        <id>Q15937</id>
        <label>ZNF79</label>
    </interactant>
    <organismsDiffer>false</organismsDiffer>
    <experiments>3</experiments>
</comment>
<comment type="subcellular location">
    <subcellularLocation>
        <location evidence="8">Nucleus</location>
    </subcellularLocation>
</comment>
<comment type="alternative products">
    <event type="alternative splicing"/>
    <isoform>
        <id>P61328-1</id>
        <name>1</name>
        <name>FGF-12A</name>
        <sequence type="displayed"/>
    </isoform>
    <isoform>
        <id>P61328-2</id>
        <name>2</name>
        <name>FGF-12B</name>
        <sequence type="described" ref="VSP_010222"/>
    </isoform>
</comment>
<comment type="tissue specificity">
    <text>Brain, eye and testis; highly expressed in embryonic retina, olfactory epithelium, olfactory bulb, and in a segmental pattern of the body wall; in adult olfactory bulb, less in cerebellum, deep cerebellar nuclei, cortex and multiple midbrain structures.</text>
</comment>
<comment type="disease" evidence="4">
    <disease id="DI-04846">
        <name>Developmental and epileptic encephalopathy 47</name>
        <acronym>DEE47</acronym>
        <description>A form of epileptic encephalopathy, a heterogeneous group of severe early-onset epilepsies characterized by refractory seizures, neurodevelopmental impairment, and poor prognosis. Development is normal prior to seizure onset, after which cognitive and motor delays become apparent.</description>
        <dbReference type="MIM" id="617166"/>
    </disease>
    <text>The disease is caused by variants affecting the gene represented in this entry.</text>
</comment>
<comment type="similarity">
    <text evidence="8">Belongs to the heparin-binding growth factors family.</text>
</comment>
<proteinExistence type="evidence at protein level"/>
<protein>
    <recommendedName>
        <fullName>Fibroblast growth factor 12</fullName>
        <shortName>FGF-12</shortName>
    </recommendedName>
    <alternativeName>
        <fullName>Fibroblast growth factor homologous factor 1</fullName>
        <shortName>FHF-1</shortName>
    </alternativeName>
    <alternativeName>
        <fullName>Myocyte-activating factor</fullName>
    </alternativeName>
</protein>
<keyword id="KW-0002">3D-structure</keyword>
<keyword id="KW-0025">Alternative splicing</keyword>
<keyword id="KW-0225">Disease variant</keyword>
<keyword id="KW-0887">Epilepsy</keyword>
<keyword id="KW-0339">Growth factor</keyword>
<keyword id="KW-0539">Nucleus</keyword>
<keyword id="KW-1267">Proteomics identification</keyword>
<keyword id="KW-1185">Reference proteome</keyword>
<organism>
    <name type="scientific">Homo sapiens</name>
    <name type="common">Human</name>
    <dbReference type="NCBI Taxonomy" id="9606"/>
    <lineage>
        <taxon>Eukaryota</taxon>
        <taxon>Metazoa</taxon>
        <taxon>Chordata</taxon>
        <taxon>Craniata</taxon>
        <taxon>Vertebrata</taxon>
        <taxon>Euteleostomi</taxon>
        <taxon>Mammalia</taxon>
        <taxon>Eutheria</taxon>
        <taxon>Euarchontoglires</taxon>
        <taxon>Primates</taxon>
        <taxon>Haplorrhini</taxon>
        <taxon>Catarrhini</taxon>
        <taxon>Hominidae</taxon>
        <taxon>Homo</taxon>
    </lineage>
</organism>
<reference key="1">
    <citation type="journal article" date="1996" name="Proc. Natl. Acad. Sci. U.S.A.">
        <title>Fibroblast growth factor (FGF) homologous factors: new members of the FGF family implicated in nervous system development.</title>
        <authorList>
            <person name="Smallwood P.M."/>
            <person name="Munoz-Sanjuan I."/>
            <person name="Tong P."/>
            <person name="Macke J.P."/>
            <person name="Hendry S.H."/>
            <person name="Gilbert D.J."/>
            <person name="Copeland N.G."/>
            <person name="Jenkins N.A."/>
            <person name="Nathans J."/>
        </authorList>
    </citation>
    <scope>NUCLEOTIDE SEQUENCE [MRNA] (ISOFORM 1)</scope>
    <source>
        <tissue>Retina</tissue>
    </source>
</reference>
<reference key="2">
    <citation type="journal article" date="1999" name="Biochem. Biophys. Res. Commun.">
        <title>Cloning and characterization of a cDNA encoding a novel fibroblast growth factor preferentially expressed in human heart.</title>
        <authorList>
            <person name="Kok L.D.S."/>
            <person name="Tsui S.K.W."/>
            <person name="Waye M.M.Y."/>
            <person name="Liew C.C."/>
            <person name="Lee C.-Y."/>
            <person name="Fung K.-P."/>
        </authorList>
    </citation>
    <scope>NUCLEOTIDE SEQUENCE [MRNA] (ISOFORM 2)</scope>
    <source>
        <tissue>Heart</tissue>
    </source>
</reference>
<reference key="3">
    <citation type="journal article" date="2004" name="Nat. Genet.">
        <title>Complete sequencing and characterization of 21,243 full-length human cDNAs.</title>
        <authorList>
            <person name="Ota T."/>
            <person name="Suzuki Y."/>
            <person name="Nishikawa T."/>
            <person name="Otsuki T."/>
            <person name="Sugiyama T."/>
            <person name="Irie R."/>
            <person name="Wakamatsu A."/>
            <person name="Hayashi K."/>
            <person name="Sato H."/>
            <person name="Nagai K."/>
            <person name="Kimura K."/>
            <person name="Makita H."/>
            <person name="Sekine M."/>
            <person name="Obayashi M."/>
            <person name="Nishi T."/>
            <person name="Shibahara T."/>
            <person name="Tanaka T."/>
            <person name="Ishii S."/>
            <person name="Yamamoto J."/>
            <person name="Saito K."/>
            <person name="Kawai Y."/>
            <person name="Isono Y."/>
            <person name="Nakamura Y."/>
            <person name="Nagahari K."/>
            <person name="Murakami K."/>
            <person name="Yasuda T."/>
            <person name="Iwayanagi T."/>
            <person name="Wagatsuma M."/>
            <person name="Shiratori A."/>
            <person name="Sudo H."/>
            <person name="Hosoiri T."/>
            <person name="Kaku Y."/>
            <person name="Kodaira H."/>
            <person name="Kondo H."/>
            <person name="Sugawara M."/>
            <person name="Takahashi M."/>
            <person name="Kanda K."/>
            <person name="Yokoi T."/>
            <person name="Furuya T."/>
            <person name="Kikkawa E."/>
            <person name="Omura Y."/>
            <person name="Abe K."/>
            <person name="Kamihara K."/>
            <person name="Katsuta N."/>
            <person name="Sato K."/>
            <person name="Tanikawa M."/>
            <person name="Yamazaki M."/>
            <person name="Ninomiya K."/>
            <person name="Ishibashi T."/>
            <person name="Yamashita H."/>
            <person name="Murakawa K."/>
            <person name="Fujimori K."/>
            <person name="Tanai H."/>
            <person name="Kimata M."/>
            <person name="Watanabe M."/>
            <person name="Hiraoka S."/>
            <person name="Chiba Y."/>
            <person name="Ishida S."/>
            <person name="Ono Y."/>
            <person name="Takiguchi S."/>
            <person name="Watanabe S."/>
            <person name="Yosida M."/>
            <person name="Hotuta T."/>
            <person name="Kusano J."/>
            <person name="Kanehori K."/>
            <person name="Takahashi-Fujii A."/>
            <person name="Hara H."/>
            <person name="Tanase T.-O."/>
            <person name="Nomura Y."/>
            <person name="Togiya S."/>
            <person name="Komai F."/>
            <person name="Hara R."/>
            <person name="Takeuchi K."/>
            <person name="Arita M."/>
            <person name="Imose N."/>
            <person name="Musashino K."/>
            <person name="Yuuki H."/>
            <person name="Oshima A."/>
            <person name="Sasaki N."/>
            <person name="Aotsuka S."/>
            <person name="Yoshikawa Y."/>
            <person name="Matsunawa H."/>
            <person name="Ichihara T."/>
            <person name="Shiohata N."/>
            <person name="Sano S."/>
            <person name="Moriya S."/>
            <person name="Momiyama H."/>
            <person name="Satoh N."/>
            <person name="Takami S."/>
            <person name="Terashima Y."/>
            <person name="Suzuki O."/>
            <person name="Nakagawa S."/>
            <person name="Senoh A."/>
            <person name="Mizoguchi H."/>
            <person name="Goto Y."/>
            <person name="Shimizu F."/>
            <person name="Wakebe H."/>
            <person name="Hishigaki H."/>
            <person name="Watanabe T."/>
            <person name="Sugiyama A."/>
            <person name="Takemoto M."/>
            <person name="Kawakami B."/>
            <person name="Yamazaki M."/>
            <person name="Watanabe K."/>
            <person name="Kumagai A."/>
            <person name="Itakura S."/>
            <person name="Fukuzumi Y."/>
            <person name="Fujimori Y."/>
            <person name="Komiyama M."/>
            <person name="Tashiro H."/>
            <person name="Tanigami A."/>
            <person name="Fujiwara T."/>
            <person name="Ono T."/>
            <person name="Yamada K."/>
            <person name="Fujii Y."/>
            <person name="Ozaki K."/>
            <person name="Hirao M."/>
            <person name="Ohmori Y."/>
            <person name="Kawabata A."/>
            <person name="Hikiji T."/>
            <person name="Kobatake N."/>
            <person name="Inagaki H."/>
            <person name="Ikema Y."/>
            <person name="Okamoto S."/>
            <person name="Okitani R."/>
            <person name="Kawakami T."/>
            <person name="Noguchi S."/>
            <person name="Itoh T."/>
            <person name="Shigeta K."/>
            <person name="Senba T."/>
            <person name="Matsumura K."/>
            <person name="Nakajima Y."/>
            <person name="Mizuno T."/>
            <person name="Morinaga M."/>
            <person name="Sasaki M."/>
            <person name="Togashi T."/>
            <person name="Oyama M."/>
            <person name="Hata H."/>
            <person name="Watanabe M."/>
            <person name="Komatsu T."/>
            <person name="Mizushima-Sugano J."/>
            <person name="Satoh T."/>
            <person name="Shirai Y."/>
            <person name="Takahashi Y."/>
            <person name="Nakagawa K."/>
            <person name="Okumura K."/>
            <person name="Nagase T."/>
            <person name="Nomura N."/>
            <person name="Kikuchi H."/>
            <person name="Masuho Y."/>
            <person name="Yamashita R."/>
            <person name="Nakai K."/>
            <person name="Yada T."/>
            <person name="Nakamura Y."/>
            <person name="Ohara O."/>
            <person name="Isogai T."/>
            <person name="Sugano S."/>
        </authorList>
    </citation>
    <scope>NUCLEOTIDE SEQUENCE [LARGE SCALE MRNA] (ISOFORMS 1 AND 2)</scope>
    <source>
        <tissue>Hippocampus</tissue>
        <tissue>Thalamus</tissue>
    </source>
</reference>
<reference key="4">
    <citation type="submission" date="2005-09" db="EMBL/GenBank/DDBJ databases">
        <authorList>
            <person name="Mural R.J."/>
            <person name="Istrail S."/>
            <person name="Sutton G.G."/>
            <person name="Florea L."/>
            <person name="Halpern A.L."/>
            <person name="Mobarry C.M."/>
            <person name="Lippert R."/>
            <person name="Walenz B."/>
            <person name="Shatkay H."/>
            <person name="Dew I."/>
            <person name="Miller J.R."/>
            <person name="Flanigan M.J."/>
            <person name="Edwards N.J."/>
            <person name="Bolanos R."/>
            <person name="Fasulo D."/>
            <person name="Halldorsson B.V."/>
            <person name="Hannenhalli S."/>
            <person name="Turner R."/>
            <person name="Yooseph S."/>
            <person name="Lu F."/>
            <person name="Nusskern D.R."/>
            <person name="Shue B.C."/>
            <person name="Zheng X.H."/>
            <person name="Zhong F."/>
            <person name="Delcher A.L."/>
            <person name="Huson D.H."/>
            <person name="Kravitz S.A."/>
            <person name="Mouchard L."/>
            <person name="Reinert K."/>
            <person name="Remington K.A."/>
            <person name="Clark A.G."/>
            <person name="Waterman M.S."/>
            <person name="Eichler E.E."/>
            <person name="Adams M.D."/>
            <person name="Hunkapiller M.W."/>
            <person name="Myers E.W."/>
            <person name="Venter J.C."/>
        </authorList>
    </citation>
    <scope>NUCLEOTIDE SEQUENCE [LARGE SCALE GENOMIC DNA]</scope>
</reference>
<reference key="5">
    <citation type="journal article" date="2004" name="Genome Res.">
        <title>The status, quality, and expansion of the NIH full-length cDNA project: the Mammalian Gene Collection (MGC).</title>
        <authorList>
            <consortium name="The MGC Project Team"/>
        </authorList>
    </citation>
    <scope>NUCLEOTIDE SEQUENCE [LARGE SCALE MRNA] (ISOFORM 2)</scope>
    <source>
        <tissue>Brain</tissue>
    </source>
</reference>
<reference key="6">
    <citation type="journal article" date="2016" name="Neurology">
        <title>Gain-of-function FHF1 mutation causes early-onset epileptic encephalopathy with cerebellar atrophy.</title>
        <authorList>
            <person name="Siekierska A."/>
            <person name="Isrie M."/>
            <person name="Liu Y."/>
            <person name="Scheldeman C."/>
            <person name="Vanthillo N."/>
            <person name="Lagae L."/>
            <person name="de Witte P.A."/>
            <person name="Van Esch H."/>
            <person name="Goldfarb M."/>
            <person name="Buyse G.M."/>
        </authorList>
    </citation>
    <scope>FUNCTION</scope>
    <scope>INVOLVEMENT IN DEE47</scope>
    <scope>VARIANT DEE47 HIS-114</scope>
    <scope>CHARACTERIZATION OF VARIANT DEE47 HIS-114</scope>
    <scope>MUTAGENESIS OF ARG-114</scope>
</reference>
<accession>P61328</accession>
<accession>B2R6B7</accession>
<accession>B2R976</accession>
<accession>O35339</accession>
<accession>P70376</accession>
<accession>Q8TBG5</accession>
<accession>Q92912</accession>
<accession>Q93001</accession>